<feature type="chain" id="PRO_0000374375" description="tRNA-2-methylthio-N(6)-dimethylallyladenosine synthase">
    <location>
        <begin position="1"/>
        <end position="442"/>
    </location>
</feature>
<feature type="domain" description="MTTase N-terminal" evidence="1">
    <location>
        <begin position="5"/>
        <end position="122"/>
    </location>
</feature>
<feature type="domain" description="Radical SAM core" evidence="2">
    <location>
        <begin position="145"/>
        <end position="377"/>
    </location>
</feature>
<feature type="domain" description="TRAM" evidence="1">
    <location>
        <begin position="380"/>
        <end position="442"/>
    </location>
</feature>
<feature type="binding site" evidence="1">
    <location>
        <position position="14"/>
    </location>
    <ligand>
        <name>[4Fe-4S] cluster</name>
        <dbReference type="ChEBI" id="CHEBI:49883"/>
        <label>1</label>
    </ligand>
</feature>
<feature type="binding site" evidence="1">
    <location>
        <position position="51"/>
    </location>
    <ligand>
        <name>[4Fe-4S] cluster</name>
        <dbReference type="ChEBI" id="CHEBI:49883"/>
        <label>1</label>
    </ligand>
</feature>
<feature type="binding site" evidence="1">
    <location>
        <position position="85"/>
    </location>
    <ligand>
        <name>[4Fe-4S] cluster</name>
        <dbReference type="ChEBI" id="CHEBI:49883"/>
        <label>1</label>
    </ligand>
</feature>
<feature type="binding site" evidence="1">
    <location>
        <position position="159"/>
    </location>
    <ligand>
        <name>[4Fe-4S] cluster</name>
        <dbReference type="ChEBI" id="CHEBI:49883"/>
        <label>2</label>
        <note>4Fe-4S-S-AdoMet</note>
    </ligand>
</feature>
<feature type="binding site" evidence="1">
    <location>
        <position position="163"/>
    </location>
    <ligand>
        <name>[4Fe-4S] cluster</name>
        <dbReference type="ChEBI" id="CHEBI:49883"/>
        <label>2</label>
        <note>4Fe-4S-S-AdoMet</note>
    </ligand>
</feature>
<feature type="binding site" evidence="1">
    <location>
        <position position="166"/>
    </location>
    <ligand>
        <name>[4Fe-4S] cluster</name>
        <dbReference type="ChEBI" id="CHEBI:49883"/>
        <label>2</label>
        <note>4Fe-4S-S-AdoMet</note>
    </ligand>
</feature>
<gene>
    <name evidence="1" type="primary">miaB</name>
    <name type="ordered locus">Mfla_0651</name>
</gene>
<name>MIAB_METFK</name>
<protein>
    <recommendedName>
        <fullName evidence="1">tRNA-2-methylthio-N(6)-dimethylallyladenosine synthase</fullName>
        <ecNumber evidence="1">2.8.4.3</ecNumber>
    </recommendedName>
    <alternativeName>
        <fullName evidence="1">(Dimethylallyl)adenosine tRNA methylthiotransferase MiaB</fullName>
    </alternativeName>
    <alternativeName>
        <fullName evidence="1">tRNA-i(6)A37 methylthiotransferase</fullName>
    </alternativeName>
</protein>
<sequence>MNLPKRIFIKTFGCQMNEYDSSRMLDMLQAAEGMQTTDNPEEADVILLNTCSVREKAQEKVFSHLGRFAPLKEKNPDLVIGVGGCVASQEGESIVARAPYVDVVFGPQTLHRLPDMIESKRRTGISQVDISFPEVEKFDHLPPPRVEGAAAFLSIMEGCSKYCTFCVVPYTRGDEVSRPFDDILTEAIQLAEQGVKEITLLGQNVNGYRSETADGEMADLALLIEYLAEIPEIERIRYTTSHPNEMTPALIDCYARIPKLVSHLHLPVQAGSDRVLMNMKRNYTVLQYKSIIRKLRAARPDICISSDFIVGFPGETEQDFEATMKLMRDVGFDFSFSFIYSPRPGTPASYLPDDCSPEEKQSRLSRLQALNEAQGKAISASMVGSIQRVLIESVSAKRADELAGRTDNNRIVNFPGDTALINQFVNVRITEALSHTLRGELV</sequence>
<evidence type="ECO:0000255" key="1">
    <source>
        <dbReference type="HAMAP-Rule" id="MF_01864"/>
    </source>
</evidence>
<evidence type="ECO:0000255" key="2">
    <source>
        <dbReference type="PROSITE-ProRule" id="PRU01266"/>
    </source>
</evidence>
<keyword id="KW-0004">4Fe-4S</keyword>
<keyword id="KW-0963">Cytoplasm</keyword>
<keyword id="KW-0408">Iron</keyword>
<keyword id="KW-0411">Iron-sulfur</keyword>
<keyword id="KW-0479">Metal-binding</keyword>
<keyword id="KW-1185">Reference proteome</keyword>
<keyword id="KW-0949">S-adenosyl-L-methionine</keyword>
<keyword id="KW-0808">Transferase</keyword>
<keyword id="KW-0819">tRNA processing</keyword>
<proteinExistence type="inferred from homology"/>
<comment type="function">
    <text evidence="1">Catalyzes the methylthiolation of N6-(dimethylallyl)adenosine (i(6)A), leading to the formation of 2-methylthio-N6-(dimethylallyl)adenosine (ms(2)i(6)A) at position 37 in tRNAs that read codons beginning with uridine.</text>
</comment>
<comment type="catalytic activity">
    <reaction evidence="1">
        <text>N(6)-dimethylallyladenosine(37) in tRNA + (sulfur carrier)-SH + AH2 + 2 S-adenosyl-L-methionine = 2-methylsulfanyl-N(6)-dimethylallyladenosine(37) in tRNA + (sulfur carrier)-H + 5'-deoxyadenosine + L-methionine + A + S-adenosyl-L-homocysteine + 2 H(+)</text>
        <dbReference type="Rhea" id="RHEA:37067"/>
        <dbReference type="Rhea" id="RHEA-COMP:10375"/>
        <dbReference type="Rhea" id="RHEA-COMP:10376"/>
        <dbReference type="Rhea" id="RHEA-COMP:14737"/>
        <dbReference type="Rhea" id="RHEA-COMP:14739"/>
        <dbReference type="ChEBI" id="CHEBI:13193"/>
        <dbReference type="ChEBI" id="CHEBI:15378"/>
        <dbReference type="ChEBI" id="CHEBI:17319"/>
        <dbReference type="ChEBI" id="CHEBI:17499"/>
        <dbReference type="ChEBI" id="CHEBI:29917"/>
        <dbReference type="ChEBI" id="CHEBI:57844"/>
        <dbReference type="ChEBI" id="CHEBI:57856"/>
        <dbReference type="ChEBI" id="CHEBI:59789"/>
        <dbReference type="ChEBI" id="CHEBI:64428"/>
        <dbReference type="ChEBI" id="CHEBI:74415"/>
        <dbReference type="ChEBI" id="CHEBI:74417"/>
        <dbReference type="EC" id="2.8.4.3"/>
    </reaction>
</comment>
<comment type="cofactor">
    <cofactor evidence="1">
        <name>[4Fe-4S] cluster</name>
        <dbReference type="ChEBI" id="CHEBI:49883"/>
    </cofactor>
    <text evidence="1">Binds 2 [4Fe-4S] clusters. One cluster is coordinated with 3 cysteines and an exchangeable S-adenosyl-L-methionine.</text>
</comment>
<comment type="subunit">
    <text evidence="1">Monomer.</text>
</comment>
<comment type="subcellular location">
    <subcellularLocation>
        <location evidence="1">Cytoplasm</location>
    </subcellularLocation>
</comment>
<comment type="similarity">
    <text evidence="1">Belongs to the methylthiotransferase family. MiaB subfamily.</text>
</comment>
<dbReference type="EC" id="2.8.4.3" evidence="1"/>
<dbReference type="EMBL" id="CP000284">
    <property type="protein sequence ID" value="ABE48921.1"/>
    <property type="molecule type" value="Genomic_DNA"/>
</dbReference>
<dbReference type="RefSeq" id="WP_011479018.1">
    <property type="nucleotide sequence ID" value="NC_007947.1"/>
</dbReference>
<dbReference type="SMR" id="Q1H3L6"/>
<dbReference type="STRING" id="265072.Mfla_0651"/>
<dbReference type="KEGG" id="mfa:Mfla_0651"/>
<dbReference type="eggNOG" id="COG0621">
    <property type="taxonomic scope" value="Bacteria"/>
</dbReference>
<dbReference type="HOGENOM" id="CLU_018697_2_0_4"/>
<dbReference type="OrthoDB" id="9805215at2"/>
<dbReference type="Proteomes" id="UP000002440">
    <property type="component" value="Chromosome"/>
</dbReference>
<dbReference type="GO" id="GO:0005829">
    <property type="term" value="C:cytosol"/>
    <property type="evidence" value="ECO:0007669"/>
    <property type="project" value="TreeGrafter"/>
</dbReference>
<dbReference type="GO" id="GO:0051539">
    <property type="term" value="F:4 iron, 4 sulfur cluster binding"/>
    <property type="evidence" value="ECO:0007669"/>
    <property type="project" value="UniProtKB-UniRule"/>
</dbReference>
<dbReference type="GO" id="GO:0046872">
    <property type="term" value="F:metal ion binding"/>
    <property type="evidence" value="ECO:0007669"/>
    <property type="project" value="UniProtKB-KW"/>
</dbReference>
<dbReference type="GO" id="GO:0035597">
    <property type="term" value="F:N6-isopentenyladenosine methylthiotransferase activity"/>
    <property type="evidence" value="ECO:0007669"/>
    <property type="project" value="TreeGrafter"/>
</dbReference>
<dbReference type="CDD" id="cd01335">
    <property type="entry name" value="Radical_SAM"/>
    <property type="match status" value="1"/>
</dbReference>
<dbReference type="FunFam" id="3.40.50.12160:FF:000001">
    <property type="entry name" value="tRNA-2-methylthio-N(6)-dimethylallyladenosine synthase"/>
    <property type="match status" value="1"/>
</dbReference>
<dbReference type="FunFam" id="3.80.30.20:FF:000001">
    <property type="entry name" value="tRNA-2-methylthio-N(6)-dimethylallyladenosine synthase 2"/>
    <property type="match status" value="1"/>
</dbReference>
<dbReference type="Gene3D" id="3.40.50.12160">
    <property type="entry name" value="Methylthiotransferase, N-terminal domain"/>
    <property type="match status" value="1"/>
</dbReference>
<dbReference type="Gene3D" id="3.80.30.20">
    <property type="entry name" value="tm_1862 like domain"/>
    <property type="match status" value="1"/>
</dbReference>
<dbReference type="HAMAP" id="MF_01864">
    <property type="entry name" value="tRNA_metthiotr_MiaB"/>
    <property type="match status" value="1"/>
</dbReference>
<dbReference type="InterPro" id="IPR006638">
    <property type="entry name" value="Elp3/MiaA/NifB-like_rSAM"/>
</dbReference>
<dbReference type="InterPro" id="IPR005839">
    <property type="entry name" value="Methylthiotransferase"/>
</dbReference>
<dbReference type="InterPro" id="IPR020612">
    <property type="entry name" value="Methylthiotransferase_CS"/>
</dbReference>
<dbReference type="InterPro" id="IPR013848">
    <property type="entry name" value="Methylthiotransferase_N"/>
</dbReference>
<dbReference type="InterPro" id="IPR038135">
    <property type="entry name" value="Methylthiotransferase_N_sf"/>
</dbReference>
<dbReference type="InterPro" id="IPR006463">
    <property type="entry name" value="MiaB_methiolase"/>
</dbReference>
<dbReference type="InterPro" id="IPR007197">
    <property type="entry name" value="rSAM"/>
</dbReference>
<dbReference type="InterPro" id="IPR023404">
    <property type="entry name" value="rSAM_horseshoe"/>
</dbReference>
<dbReference type="InterPro" id="IPR002792">
    <property type="entry name" value="TRAM_dom"/>
</dbReference>
<dbReference type="NCBIfam" id="TIGR01574">
    <property type="entry name" value="miaB-methiolase"/>
    <property type="match status" value="1"/>
</dbReference>
<dbReference type="NCBIfam" id="TIGR00089">
    <property type="entry name" value="MiaB/RimO family radical SAM methylthiotransferase"/>
    <property type="match status" value="1"/>
</dbReference>
<dbReference type="PANTHER" id="PTHR43020">
    <property type="entry name" value="CDK5 REGULATORY SUBUNIT-ASSOCIATED PROTEIN 1"/>
    <property type="match status" value="1"/>
</dbReference>
<dbReference type="PANTHER" id="PTHR43020:SF2">
    <property type="entry name" value="MITOCHONDRIAL TRNA METHYLTHIOTRANSFERASE CDK5RAP1"/>
    <property type="match status" value="1"/>
</dbReference>
<dbReference type="Pfam" id="PF04055">
    <property type="entry name" value="Radical_SAM"/>
    <property type="match status" value="1"/>
</dbReference>
<dbReference type="Pfam" id="PF01938">
    <property type="entry name" value="TRAM"/>
    <property type="match status" value="1"/>
</dbReference>
<dbReference type="Pfam" id="PF00919">
    <property type="entry name" value="UPF0004"/>
    <property type="match status" value="1"/>
</dbReference>
<dbReference type="SFLD" id="SFLDF00273">
    <property type="entry name" value="(dimethylallyl)adenosine_tRNA"/>
    <property type="match status" value="1"/>
</dbReference>
<dbReference type="SFLD" id="SFLDG01082">
    <property type="entry name" value="B12-binding_domain_containing"/>
    <property type="match status" value="1"/>
</dbReference>
<dbReference type="SFLD" id="SFLDS00029">
    <property type="entry name" value="Radical_SAM"/>
    <property type="match status" value="1"/>
</dbReference>
<dbReference type="SMART" id="SM00729">
    <property type="entry name" value="Elp3"/>
    <property type="match status" value="1"/>
</dbReference>
<dbReference type="SUPFAM" id="SSF102114">
    <property type="entry name" value="Radical SAM enzymes"/>
    <property type="match status" value="1"/>
</dbReference>
<dbReference type="PROSITE" id="PS51449">
    <property type="entry name" value="MTTASE_N"/>
    <property type="match status" value="1"/>
</dbReference>
<dbReference type="PROSITE" id="PS01278">
    <property type="entry name" value="MTTASE_RADICAL"/>
    <property type="match status" value="1"/>
</dbReference>
<dbReference type="PROSITE" id="PS51918">
    <property type="entry name" value="RADICAL_SAM"/>
    <property type="match status" value="1"/>
</dbReference>
<dbReference type="PROSITE" id="PS50926">
    <property type="entry name" value="TRAM"/>
    <property type="match status" value="1"/>
</dbReference>
<organism>
    <name type="scientific">Methylobacillus flagellatus (strain ATCC 51484 / DSM 6875 / VKM B-1610 / KT)</name>
    <dbReference type="NCBI Taxonomy" id="265072"/>
    <lineage>
        <taxon>Bacteria</taxon>
        <taxon>Pseudomonadati</taxon>
        <taxon>Pseudomonadota</taxon>
        <taxon>Betaproteobacteria</taxon>
        <taxon>Nitrosomonadales</taxon>
        <taxon>Methylophilaceae</taxon>
        <taxon>Methylobacillus</taxon>
    </lineage>
</organism>
<reference key="1">
    <citation type="submission" date="2006-03" db="EMBL/GenBank/DDBJ databases">
        <title>Complete sequence of Methylobacillus flagellatus KT.</title>
        <authorList>
            <consortium name="US DOE Joint Genome Institute"/>
            <person name="Copeland A."/>
            <person name="Lucas S."/>
            <person name="Lapidus A."/>
            <person name="Barry K."/>
            <person name="Detter J.C."/>
            <person name="Glavina del Rio T."/>
            <person name="Hammon N."/>
            <person name="Israni S."/>
            <person name="Dalin E."/>
            <person name="Tice H."/>
            <person name="Pitluck S."/>
            <person name="Brettin T."/>
            <person name="Bruce D."/>
            <person name="Han C."/>
            <person name="Tapia R."/>
            <person name="Saunders E."/>
            <person name="Gilna P."/>
            <person name="Schmutz J."/>
            <person name="Larimer F."/>
            <person name="Land M."/>
            <person name="Kyrpides N."/>
            <person name="Anderson I."/>
            <person name="Richardson P."/>
        </authorList>
    </citation>
    <scope>NUCLEOTIDE SEQUENCE [LARGE SCALE GENOMIC DNA]</scope>
    <source>
        <strain>ATCC 51484 / DSM 6875 / VKM B-1610 / KT</strain>
    </source>
</reference>
<accession>Q1H3L6</accession>